<name>SSUB1_PSEF5</name>
<accession>Q4KGX6</accession>
<keyword id="KW-0067">ATP-binding</keyword>
<keyword id="KW-0997">Cell inner membrane</keyword>
<keyword id="KW-1003">Cell membrane</keyword>
<keyword id="KW-0472">Membrane</keyword>
<keyword id="KW-0547">Nucleotide-binding</keyword>
<keyword id="KW-1278">Translocase</keyword>
<keyword id="KW-0813">Transport</keyword>
<evidence type="ECO:0000255" key="1">
    <source>
        <dbReference type="HAMAP-Rule" id="MF_01724"/>
    </source>
</evidence>
<organism>
    <name type="scientific">Pseudomonas fluorescens (strain ATCC BAA-477 / NRRL B-23932 / Pf-5)</name>
    <dbReference type="NCBI Taxonomy" id="220664"/>
    <lineage>
        <taxon>Bacteria</taxon>
        <taxon>Pseudomonadati</taxon>
        <taxon>Pseudomonadota</taxon>
        <taxon>Gammaproteobacteria</taxon>
        <taxon>Pseudomonadales</taxon>
        <taxon>Pseudomonadaceae</taxon>
        <taxon>Pseudomonas</taxon>
    </lineage>
</organism>
<comment type="function">
    <text evidence="1">Part of the ABC transporter complex SsuABC involved in aliphatic sulfonates import. Responsible for energy coupling to the transport system.</text>
</comment>
<comment type="catalytic activity">
    <reaction evidence="1">
        <text>ATP + H2O + aliphatic sulfonate-[sulfonate-binding protein]Side 1 = ADP + phosphate + aliphatic sulfonateSide 2 + [sulfonate-binding protein]Side 1.</text>
        <dbReference type="EC" id="7.6.2.14"/>
    </reaction>
</comment>
<comment type="subunit">
    <text evidence="1">The complex is composed of two ATP-binding proteins (SsuB), two transmembrane proteins (SsuC) and a solute-binding protein (SsuA).</text>
</comment>
<comment type="subcellular location">
    <subcellularLocation>
        <location evidence="1">Cell inner membrane</location>
        <topology evidence="1">Peripheral membrane protein</topology>
    </subcellularLocation>
</comment>
<comment type="similarity">
    <text evidence="1">Belongs to the ABC transporter superfamily. Aliphatic sulfonates importer (TC 3.A.1.17.2) family.</text>
</comment>
<protein>
    <recommendedName>
        <fullName evidence="1">Aliphatic sulfonates import ATP-binding protein SsuB 1</fullName>
        <ecNumber evidence="1">7.6.2.14</ecNumber>
    </recommendedName>
</protein>
<reference key="1">
    <citation type="journal article" date="2005" name="Nat. Biotechnol.">
        <title>Complete genome sequence of the plant commensal Pseudomonas fluorescens Pf-5.</title>
        <authorList>
            <person name="Paulsen I.T."/>
            <person name="Press C.M."/>
            <person name="Ravel J."/>
            <person name="Kobayashi D.Y."/>
            <person name="Myers G.S.A."/>
            <person name="Mavrodi D.V."/>
            <person name="DeBoy R.T."/>
            <person name="Seshadri R."/>
            <person name="Ren Q."/>
            <person name="Madupu R."/>
            <person name="Dodson R.J."/>
            <person name="Durkin A.S."/>
            <person name="Brinkac L.M."/>
            <person name="Daugherty S.C."/>
            <person name="Sullivan S.A."/>
            <person name="Rosovitz M.J."/>
            <person name="Gwinn M.L."/>
            <person name="Zhou L."/>
            <person name="Schneider D.J."/>
            <person name="Cartinhour S.W."/>
            <person name="Nelson W.C."/>
            <person name="Weidman J."/>
            <person name="Watkins K."/>
            <person name="Tran K."/>
            <person name="Khouri H."/>
            <person name="Pierson E.A."/>
            <person name="Pierson L.S. III"/>
            <person name="Thomashow L.S."/>
            <person name="Loper J.E."/>
        </authorList>
    </citation>
    <scope>NUCLEOTIDE SEQUENCE [LARGE SCALE GENOMIC DNA]</scope>
    <source>
        <strain>ATCC BAA-477 / NRRL B-23932 / Pf-5</strain>
    </source>
</reference>
<proteinExistence type="inferred from homology"/>
<sequence>MTLSLPQQGRLRAAVECRRITRRFAGQAVLDGLDLDIAPGEFVALLGSSGSGKTTLLRTLAGLEPIDQGQLQVPSAMAAVFQEPRLMPWKRVWRNVALGVRGAGARERAEAALEEVGLAHRLNAWPGTLSGGEAQRVALARALVREPHLLLLDEPFAALDALTRIRMHQLIIRLWRVHTPAVLLVTHDVDEALLLADRVLVLANGQIAEQLPIRLPRPRQASTPGFQALRARLLQLLGVETEAEPAVDISLPLSRTASR</sequence>
<gene>
    <name evidence="1" type="primary">ssuB1</name>
    <name type="ordered locus">PFL_1378</name>
</gene>
<dbReference type="EC" id="7.6.2.14" evidence="1"/>
<dbReference type="EMBL" id="CP000076">
    <property type="protein sequence ID" value="AAY90663.1"/>
    <property type="molecule type" value="Genomic_DNA"/>
</dbReference>
<dbReference type="RefSeq" id="WP_011059720.1">
    <property type="nucleotide sequence ID" value="NC_004129.6"/>
</dbReference>
<dbReference type="SMR" id="Q4KGX6"/>
<dbReference type="STRING" id="220664.PFL_1378"/>
<dbReference type="KEGG" id="pfl:PFL_1378"/>
<dbReference type="PATRIC" id="fig|220664.5.peg.1412"/>
<dbReference type="eggNOG" id="COG1116">
    <property type="taxonomic scope" value="Bacteria"/>
</dbReference>
<dbReference type="HOGENOM" id="CLU_000604_1_22_6"/>
<dbReference type="Proteomes" id="UP000008540">
    <property type="component" value="Chromosome"/>
</dbReference>
<dbReference type="GO" id="GO:0005886">
    <property type="term" value="C:plasma membrane"/>
    <property type="evidence" value="ECO:0007669"/>
    <property type="project" value="UniProtKB-SubCell"/>
</dbReference>
<dbReference type="GO" id="GO:0005524">
    <property type="term" value="F:ATP binding"/>
    <property type="evidence" value="ECO:0007669"/>
    <property type="project" value="UniProtKB-KW"/>
</dbReference>
<dbReference type="GO" id="GO:0016887">
    <property type="term" value="F:ATP hydrolysis activity"/>
    <property type="evidence" value="ECO:0007669"/>
    <property type="project" value="InterPro"/>
</dbReference>
<dbReference type="Gene3D" id="3.40.50.300">
    <property type="entry name" value="P-loop containing nucleotide triphosphate hydrolases"/>
    <property type="match status" value="1"/>
</dbReference>
<dbReference type="InterPro" id="IPR003593">
    <property type="entry name" value="AAA+_ATPase"/>
</dbReference>
<dbReference type="InterPro" id="IPR003439">
    <property type="entry name" value="ABC_transporter-like_ATP-bd"/>
</dbReference>
<dbReference type="InterPro" id="IPR017871">
    <property type="entry name" value="ABC_transporter-like_CS"/>
</dbReference>
<dbReference type="InterPro" id="IPR050166">
    <property type="entry name" value="ABC_transporter_ATP-bind"/>
</dbReference>
<dbReference type="InterPro" id="IPR027417">
    <property type="entry name" value="P-loop_NTPase"/>
</dbReference>
<dbReference type="PANTHER" id="PTHR42788:SF17">
    <property type="entry name" value="ALIPHATIC SULFONATES IMPORT ATP-BINDING PROTEIN SSUB"/>
    <property type="match status" value="1"/>
</dbReference>
<dbReference type="PANTHER" id="PTHR42788">
    <property type="entry name" value="TAURINE IMPORT ATP-BINDING PROTEIN-RELATED"/>
    <property type="match status" value="1"/>
</dbReference>
<dbReference type="Pfam" id="PF00005">
    <property type="entry name" value="ABC_tran"/>
    <property type="match status" value="1"/>
</dbReference>
<dbReference type="SMART" id="SM00382">
    <property type="entry name" value="AAA"/>
    <property type="match status" value="1"/>
</dbReference>
<dbReference type="SUPFAM" id="SSF52540">
    <property type="entry name" value="P-loop containing nucleoside triphosphate hydrolases"/>
    <property type="match status" value="1"/>
</dbReference>
<dbReference type="PROSITE" id="PS00211">
    <property type="entry name" value="ABC_TRANSPORTER_1"/>
    <property type="match status" value="1"/>
</dbReference>
<dbReference type="PROSITE" id="PS50893">
    <property type="entry name" value="ABC_TRANSPORTER_2"/>
    <property type="match status" value="1"/>
</dbReference>
<dbReference type="PROSITE" id="PS51291">
    <property type="entry name" value="SSUB"/>
    <property type="match status" value="1"/>
</dbReference>
<feature type="chain" id="PRO_0000279932" description="Aliphatic sulfonates import ATP-binding protein SsuB 1">
    <location>
        <begin position="1"/>
        <end position="259"/>
    </location>
</feature>
<feature type="domain" description="ABC transporter" evidence="1">
    <location>
        <begin position="15"/>
        <end position="229"/>
    </location>
</feature>
<feature type="binding site" evidence="1">
    <location>
        <begin position="47"/>
        <end position="54"/>
    </location>
    <ligand>
        <name>ATP</name>
        <dbReference type="ChEBI" id="CHEBI:30616"/>
    </ligand>
</feature>